<feature type="chain" id="PRO_0000193889" description="Probable phosphoketolase">
    <location>
        <begin position="1"/>
        <end position="783"/>
    </location>
</feature>
<sequence>MSDVLSNDLLQKMDAYWRAANYLSVGQIYLQDNPLLDQKLQLDHIKPRLLGHWGTTPGLNLLYVHLNRLITEHDLDMIYITGPGHGGPGLVANAYLEGTYTERYPAIERSRNGMQRLFRQFSWPHGVPSHVSPETPGSIHEGGELGYSLAHAYGAAFDNPNLIVACVVGDGEAETGALATSWHSNKFLNPARDGAVLPILHLNGFKIANPTVLARITPQELTDLMRGYGYEPHFVEGDDPAVVHQTLAATLERVLGEIRAIQDKARNHGDTERPRWPMIVMRTPKGWTGPKQVDGKPVEGTWRAHQVPIADFKNPEHLTLLEDWMRSYRPDELFDATGKLRDELQALAPTGRRRMSANPHANGGELLEPLSLPDFHDYAVTLTGPGALKAEATRVLGTFLRDVMKNSLESENFRLFGPDETASNRLDAVLQVSPKEWMAAIEDVDVDLSPDGRVMEVLSEHLCQGWLEGYLLTGRHGFFSCYEAFIHIIDSMFNQHAKWLKACATIPWRKPIASLNYLLTSHVWRQDHNGFSHQDPGFIDHVANKKSNVVRIYLPPDANCLLSVADHCLRSRNYVNLIVAGKQPEWQWLDIDAAVRHCTTGAGIWHWASDEGEPDVVMACAGDVPTVETLAAVKLLREYVPDIKIRVVNVVDLMVLQPSSEHPHGLDDRRFDELFTTDKPVIFAFHGYPWLIHRLTYRRRNHVNIHVRGYKEEGTTTTPFDMVVLNDLDRYRLALDAILRIPRLADQRDAATSRYWATMQRHKLYIGEHGDDLPEVRDWRWSA</sequence>
<comment type="cofactor">
    <cofactor evidence="1">
        <name>thiamine diphosphate</name>
        <dbReference type="ChEBI" id="CHEBI:58937"/>
    </cofactor>
</comment>
<comment type="similarity">
    <text evidence="1">Belongs to the XFP family.</text>
</comment>
<protein>
    <recommendedName>
        <fullName evidence="1">Probable phosphoketolase</fullName>
        <ecNumber evidence="1">4.1.2.-</ecNumber>
    </recommendedName>
</protein>
<gene>
    <name type="ordered locus">RPA1673</name>
</gene>
<keyword id="KW-0456">Lyase</keyword>
<keyword id="KW-0786">Thiamine pyrophosphate</keyword>
<reference key="1">
    <citation type="journal article" date="2004" name="Nat. Biotechnol.">
        <title>Complete genome sequence of the metabolically versatile photosynthetic bacterium Rhodopseudomonas palustris.</title>
        <authorList>
            <person name="Larimer F.W."/>
            <person name="Chain P."/>
            <person name="Hauser L."/>
            <person name="Lamerdin J.E."/>
            <person name="Malfatti S."/>
            <person name="Do L."/>
            <person name="Land M.L."/>
            <person name="Pelletier D.A."/>
            <person name="Beatty J.T."/>
            <person name="Lang A.S."/>
            <person name="Tabita F.R."/>
            <person name="Gibson J.L."/>
            <person name="Hanson T.E."/>
            <person name="Bobst C."/>
            <person name="Torres y Torres J.L."/>
            <person name="Peres C."/>
            <person name="Harrison F.H."/>
            <person name="Gibson J."/>
            <person name="Harwood C.S."/>
        </authorList>
    </citation>
    <scope>NUCLEOTIDE SEQUENCE [LARGE SCALE GENOMIC DNA]</scope>
    <source>
        <strain>ATCC BAA-98 / CGA009</strain>
    </source>
</reference>
<proteinExistence type="inferred from homology"/>
<name>PHK_RHOPA</name>
<evidence type="ECO:0000255" key="1">
    <source>
        <dbReference type="HAMAP-Rule" id="MF_01403"/>
    </source>
</evidence>
<accession>Q6N976</accession>
<organism>
    <name type="scientific">Rhodopseudomonas palustris (strain ATCC BAA-98 / CGA009)</name>
    <dbReference type="NCBI Taxonomy" id="258594"/>
    <lineage>
        <taxon>Bacteria</taxon>
        <taxon>Pseudomonadati</taxon>
        <taxon>Pseudomonadota</taxon>
        <taxon>Alphaproteobacteria</taxon>
        <taxon>Hyphomicrobiales</taxon>
        <taxon>Nitrobacteraceae</taxon>
        <taxon>Rhodopseudomonas</taxon>
    </lineage>
</organism>
<dbReference type="EC" id="4.1.2.-" evidence="1"/>
<dbReference type="EMBL" id="BX572598">
    <property type="protein sequence ID" value="CAE27114.1"/>
    <property type="molecule type" value="Genomic_DNA"/>
</dbReference>
<dbReference type="RefSeq" id="WP_011157232.1">
    <property type="nucleotide sequence ID" value="NZ_CP116810.1"/>
</dbReference>
<dbReference type="SMR" id="Q6N976"/>
<dbReference type="STRING" id="258594.RPA1673"/>
<dbReference type="GeneID" id="66892707"/>
<dbReference type="eggNOG" id="COG3957">
    <property type="taxonomic scope" value="Bacteria"/>
</dbReference>
<dbReference type="HOGENOM" id="CLU_013954_2_0_5"/>
<dbReference type="PhylomeDB" id="Q6N976"/>
<dbReference type="GO" id="GO:0016832">
    <property type="term" value="F:aldehyde-lyase activity"/>
    <property type="evidence" value="ECO:0007669"/>
    <property type="project" value="UniProtKB-UniRule"/>
</dbReference>
<dbReference type="GO" id="GO:0005975">
    <property type="term" value="P:carbohydrate metabolic process"/>
    <property type="evidence" value="ECO:0007669"/>
    <property type="project" value="InterPro"/>
</dbReference>
<dbReference type="CDD" id="cd02011">
    <property type="entry name" value="TPP_PK"/>
    <property type="match status" value="1"/>
</dbReference>
<dbReference type="FunFam" id="3.40.50.970:FF:000091">
    <property type="entry name" value="Xylulose-5-phosphate/fructose-6-phosphate phosphoketolase"/>
    <property type="match status" value="1"/>
</dbReference>
<dbReference type="Gene3D" id="3.40.50.920">
    <property type="match status" value="1"/>
</dbReference>
<dbReference type="Gene3D" id="3.40.50.970">
    <property type="match status" value="2"/>
</dbReference>
<dbReference type="HAMAP" id="MF_01403">
    <property type="entry name" value="Phosphoketolase"/>
    <property type="match status" value="1"/>
</dbReference>
<dbReference type="InterPro" id="IPR023962">
    <property type="entry name" value="Phosphoketolase"/>
</dbReference>
<dbReference type="InterPro" id="IPR029061">
    <property type="entry name" value="THDP-binding"/>
</dbReference>
<dbReference type="InterPro" id="IPR009014">
    <property type="entry name" value="Transketo_C/PFOR_II"/>
</dbReference>
<dbReference type="InterPro" id="IPR005593">
    <property type="entry name" value="Xul5P/Fru6P_PKetolase"/>
</dbReference>
<dbReference type="InterPro" id="IPR018969">
    <property type="entry name" value="Xul5P/Fru6P_PKetolase_C"/>
</dbReference>
<dbReference type="InterPro" id="IPR019790">
    <property type="entry name" value="Xul5P/Fru6P_PKetolase_CS"/>
</dbReference>
<dbReference type="InterPro" id="IPR018970">
    <property type="entry name" value="Xul5P/Fru6P_PKetolase_N"/>
</dbReference>
<dbReference type="InterPro" id="IPR019789">
    <property type="entry name" value="Xul5P/Fru6P_PKetolase_ThDP_BS"/>
</dbReference>
<dbReference type="NCBIfam" id="NF003616">
    <property type="entry name" value="PRK05261.1-1"/>
    <property type="match status" value="1"/>
</dbReference>
<dbReference type="NCBIfam" id="NF003617">
    <property type="entry name" value="PRK05261.1-2"/>
    <property type="match status" value="1"/>
</dbReference>
<dbReference type="NCBIfam" id="NF003619">
    <property type="entry name" value="PRK05261.1-4"/>
    <property type="match status" value="1"/>
</dbReference>
<dbReference type="NCBIfam" id="NF003621">
    <property type="entry name" value="PRK05261.1-6"/>
    <property type="match status" value="1"/>
</dbReference>
<dbReference type="PANTHER" id="PTHR31273">
    <property type="entry name" value="PHOSPHOKETOLASE-RELATED"/>
    <property type="match status" value="1"/>
</dbReference>
<dbReference type="PANTHER" id="PTHR31273:SF0">
    <property type="entry name" value="PHOSPHOKETOLASE-RELATED"/>
    <property type="match status" value="1"/>
</dbReference>
<dbReference type="Pfam" id="PF03894">
    <property type="entry name" value="XFP"/>
    <property type="match status" value="1"/>
</dbReference>
<dbReference type="Pfam" id="PF09363">
    <property type="entry name" value="XFP_C"/>
    <property type="match status" value="1"/>
</dbReference>
<dbReference type="Pfam" id="PF09364">
    <property type="entry name" value="XFP_N"/>
    <property type="match status" value="1"/>
</dbReference>
<dbReference type="PIRSF" id="PIRSF017245">
    <property type="entry name" value="Phosphoketolase"/>
    <property type="match status" value="1"/>
</dbReference>
<dbReference type="SUPFAM" id="SSF52518">
    <property type="entry name" value="Thiamin diphosphate-binding fold (THDP-binding)"/>
    <property type="match status" value="2"/>
</dbReference>
<dbReference type="PROSITE" id="PS60002">
    <property type="entry name" value="PHOSPHOKETOLASE_1"/>
    <property type="match status" value="1"/>
</dbReference>
<dbReference type="PROSITE" id="PS60003">
    <property type="entry name" value="PHOSPHOKETOLASE_2"/>
    <property type="match status" value="1"/>
</dbReference>